<evidence type="ECO:0000250" key="1">
    <source>
        <dbReference type="UniProtKB" id="Q50EL0"/>
    </source>
</evidence>
<evidence type="ECO:0000269" key="2">
    <source>
    </source>
</evidence>
<evidence type="ECO:0000303" key="3">
    <source>
    </source>
</evidence>
<evidence type="ECO:0000305" key="4"/>
<accession>A0A017SEF3</accession>
<sequence length="434" mass="49632">MALQTTNTWETLAQLLPSRNHDQDFWWKVTGRQLAVLLEAAGYPIERQYNTLLFHYHWAIPYLGPAPASGVAKWPSQLSVDGSPIEYSWKWNTKSKAPDVRYTMEPMSEFTGTKLDPLNQRAFRELLHKLSQFVPDVDLAPTDYFMSTLFDHDRSVLMKAVDDGVPLQFSSTALAFEFLDKGLLLKTYYAPRKLETGHFVLKDWDTAIRGYYPESKALDIVYEFLKTSPEGELMNPYHLAVDNVKDGRLKFYFQSPHRTFTSVREILTIGGRVQREGLEEQLLSLRDLLNALTGQSPDFPEDGEPPIVEEDVTADLDTDGHPELMSGYLYYFDIAPGAALPEIRFYVPIRRYCKSDLDLAQSLTAWMAANGRGTYCQQYLDLVHSLAEHREISKDRGLQRYIACLLAKNGEIEVTTYLAPETYEQVRRSQKTAV</sequence>
<comment type="function">
    <text evidence="2">Prenyltransferase; part of the gene cluster that mediates the biosynthesis of flavoglaucin and congeners (including aspergin, dihydroauroglaucin and auroglaucin), prenylated salicylaldehyde derivatives carrying a saturated or an unsaturated C-7 side chain (PubMed:32134669). The PKS fogA releases the carboxylic acid (8E,10E,12E)-3,5,7-trihydroxytetradeca-8,10,12-trienoic acid as its product, as well as derivatives with one and two double bonds (PubMed:32134669). FogA is indeed able to reduce the initial triketide, thus being at least partially responsible for the differently saturated heptyl side chains of flavoglaucin congeners (PubMed:32134669). The oxidoreductases fogB, fogC and fogD modify the nascent polyketide in fogA-bound form and, together, fogA, fogB, fogC and fogD are necessary for the formation of the aromatic core and the cyclized PKS products are released as salicyl alcohols (PubMed:32134669). In particular, fogB is responsible for oxidation of a hydroxyl group or reduction of remaining double bond(s) at the C-7 residue whereas fogD is probably involved in the reductive release of the modified PKS products (PubMed:32134669). The cytochrome P450 monooxygenase fogE is then responsible for the hydroxylation at C-3 of the benzene ring (PubMed:32134669). The fogE products are substrates of the prenyltransferase fogH and the prenylated benzyl alcohols are subsequently oxidized by the fogF to produce the final aryl aldehydes flavoglaucin and congeners (PubMed:32134669). The short-chain dehydrogenase fogG does not seem to be involved in the biosynthesis of the prenylated salicylaldehyde derivatives (PubMed:32134669).</text>
</comment>
<comment type="biophysicochemical properties">
    <kinetics>
        <KM evidence="2">0.07 mM for violaceoid C</KM>
        <KM evidence="2">0.09 mM for 2-heptyl-1-(hydroxymethyl)cyclohexa-2,5-diene-3,6-dione</KM>
    </kinetics>
</comment>
<comment type="pathway">
    <text evidence="2">Secondary metabolite biosynthesis.</text>
</comment>
<comment type="disruption phenotype">
    <text evidence="2">Leads to the accumulation of the unprenylated derivatives violaceoid C and violaceoid A.</text>
</comment>
<comment type="similarity">
    <text evidence="4">Belongs to the tryptophan dimethylallyltransferase family.</text>
</comment>
<gene>
    <name evidence="3" type="primary">fogH</name>
    <name type="ORF">EURHEDRAFT_530727</name>
</gene>
<protein>
    <recommendedName>
        <fullName evidence="3">Prenyltransferase fogH</fullName>
        <ecNumber evidence="2">2.5.1.-</ecNumber>
    </recommendedName>
    <alternativeName>
        <fullName evidence="3">Flavoglaucin biosynthesis cluster protein H</fullName>
    </alternativeName>
</protein>
<organism>
    <name type="scientific">Aspergillus ruber (strain CBS 135680)</name>
    <dbReference type="NCBI Taxonomy" id="1388766"/>
    <lineage>
        <taxon>Eukaryota</taxon>
        <taxon>Fungi</taxon>
        <taxon>Dikarya</taxon>
        <taxon>Ascomycota</taxon>
        <taxon>Pezizomycotina</taxon>
        <taxon>Eurotiomycetes</taxon>
        <taxon>Eurotiomycetidae</taxon>
        <taxon>Eurotiales</taxon>
        <taxon>Aspergillaceae</taxon>
        <taxon>Aspergillus</taxon>
        <taxon>Aspergillus subgen. Aspergillus</taxon>
    </lineage>
</organism>
<dbReference type="EC" id="2.5.1.-" evidence="2"/>
<dbReference type="EMBL" id="KK088422">
    <property type="protein sequence ID" value="EYE95342.1"/>
    <property type="molecule type" value="Genomic_DNA"/>
</dbReference>
<dbReference type="SMR" id="A0A017SEF3"/>
<dbReference type="STRING" id="1388766.A0A017SEF3"/>
<dbReference type="HOGENOM" id="CLU_037431_2_0_1"/>
<dbReference type="OrthoDB" id="3354387at2759"/>
<dbReference type="Proteomes" id="UP000019804">
    <property type="component" value="Unassembled WGS sequence"/>
</dbReference>
<dbReference type="GO" id="GO:0004659">
    <property type="term" value="F:prenyltransferase activity"/>
    <property type="evidence" value="ECO:0007669"/>
    <property type="project" value="TreeGrafter"/>
</dbReference>
<dbReference type="GO" id="GO:0009820">
    <property type="term" value="P:alkaloid metabolic process"/>
    <property type="evidence" value="ECO:0007669"/>
    <property type="project" value="InterPro"/>
</dbReference>
<dbReference type="CDD" id="cd13929">
    <property type="entry name" value="PT-DMATS_CymD"/>
    <property type="match status" value="1"/>
</dbReference>
<dbReference type="InterPro" id="IPR033964">
    <property type="entry name" value="Aro_prenylTrfase"/>
</dbReference>
<dbReference type="InterPro" id="IPR017795">
    <property type="entry name" value="Aro_prenylTrfase_DMATS"/>
</dbReference>
<dbReference type="InterPro" id="IPR012148">
    <property type="entry name" value="DMATS-type_fun"/>
</dbReference>
<dbReference type="NCBIfam" id="TIGR03429">
    <property type="entry name" value="arom_pren_DMATS"/>
    <property type="match status" value="1"/>
</dbReference>
<dbReference type="PANTHER" id="PTHR40627">
    <property type="entry name" value="INDOLE PRENYLTRANSFERASE TDIB-RELATED"/>
    <property type="match status" value="1"/>
</dbReference>
<dbReference type="PANTHER" id="PTHR40627:SF4">
    <property type="entry name" value="PRENYLTRANSFERASE ASQH1-RELATED"/>
    <property type="match status" value="1"/>
</dbReference>
<dbReference type="Pfam" id="PF11991">
    <property type="entry name" value="Trp_DMAT"/>
    <property type="match status" value="1"/>
</dbReference>
<dbReference type="PIRSF" id="PIRSF000509">
    <property type="entry name" value="Trp_DMAT"/>
    <property type="match status" value="1"/>
</dbReference>
<dbReference type="SFLD" id="SFLDS00036">
    <property type="entry name" value="Aromatic_Prenyltransferase"/>
    <property type="match status" value="1"/>
</dbReference>
<dbReference type="SFLD" id="SFLDG01162">
    <property type="entry name" value="I"/>
    <property type="match status" value="1"/>
</dbReference>
<reference key="1">
    <citation type="journal article" date="2014" name="Nat. Commun.">
        <title>Genomic adaptations of the halophilic Dead Sea filamentous fungus Eurotium rubrum.</title>
        <authorList>
            <person name="Kis-Papo T."/>
            <person name="Weig A.R."/>
            <person name="Riley R."/>
            <person name="Persoh D."/>
            <person name="Salamov A."/>
            <person name="Sun H."/>
            <person name="Lipzen A."/>
            <person name="Wasser S.P."/>
            <person name="Rambold G."/>
            <person name="Grigoriev I.V."/>
            <person name="Nevo E."/>
        </authorList>
    </citation>
    <scope>NUCLEOTIDE SEQUENCE [LARGE SCALE GENOMIC DNA]</scope>
    <source>
        <strain>CBS 135680</strain>
    </source>
</reference>
<reference key="2">
    <citation type="journal article" date="2020" name="Org. Lett.">
        <title>Biosynthesis of the prenylated salicylaldehyde flavoglaucin requires temporary reduction to salicyl alcohol for decoration before reoxidation to the final product.</title>
        <authorList>
            <person name="Nies J."/>
            <person name="Ran H."/>
            <person name="Wohlgemuth V."/>
            <person name="Yin W.B."/>
            <person name="Li S.M."/>
        </authorList>
    </citation>
    <scope>FUNCTION</scope>
    <scope>DISRUPTION PHENOTYPE</scope>
    <scope>CATALYTIC ACTIVITY</scope>
    <scope>BIOPHYSICOCHEMICAL PROPERTIES</scope>
    <scope>PATHWAY</scope>
</reference>
<name>FOGH_ASPRC</name>
<proteinExistence type="evidence at protein level"/>
<feature type="chain" id="PRO_0000456595" description="Prenyltransferase fogH">
    <location>
        <begin position="1"/>
        <end position="434"/>
    </location>
</feature>
<feature type="binding site" evidence="1">
    <location>
        <position position="86"/>
    </location>
    <ligand>
        <name>L-tryptophan</name>
        <dbReference type="ChEBI" id="CHEBI:57912"/>
    </ligand>
</feature>
<feature type="binding site" evidence="1">
    <location>
        <position position="101"/>
    </location>
    <ligand>
        <name>substrate</name>
    </ligand>
</feature>
<feature type="binding site" evidence="1">
    <location>
        <position position="248"/>
    </location>
    <ligand>
        <name>substrate</name>
    </ligand>
</feature>
<feature type="binding site" evidence="1">
    <location>
        <position position="250"/>
    </location>
    <ligand>
        <name>substrate</name>
    </ligand>
</feature>
<feature type="binding site" evidence="1">
    <location>
        <position position="252"/>
    </location>
    <ligand>
        <name>substrate</name>
    </ligand>
</feature>
<feature type="binding site" evidence="1">
    <location>
        <position position="346"/>
    </location>
    <ligand>
        <name>substrate</name>
    </ligand>
</feature>
<keyword id="KW-1185">Reference proteome</keyword>
<keyword id="KW-0808">Transferase</keyword>